<accession>Q9VJG0</accession>
<reference evidence="8" key="1">
    <citation type="journal article" date="2002" name="J. Biochem.">
        <title>A cytosolic form of aminopeptidase P from Drosophila melanogaster: molecular cloning and characterization.</title>
        <authorList>
            <person name="Kulkarni G.V."/>
            <person name="Deobagkar D.D."/>
        </authorList>
    </citation>
    <scope>NUCLEOTIDE SEQUENCE [GENOMIC DNA]</scope>
    <scope>FUNCTION</scope>
    <scope>CATALYTIC ACTIVITY</scope>
    <scope>COFACTOR</scope>
    <scope>ACTIVITY REGULATION</scope>
    <scope>BIOPHYSICOCHEMICAL PROPERTIES</scope>
    <scope>SUBCELLULAR LOCATION</scope>
    <scope>TISSUE SPECIFICITY</scope>
    <scope>DEVELOPMENTAL STAGE</scope>
</reference>
<reference evidence="10" key="2">
    <citation type="journal article" date="2000" name="Science">
        <title>The genome sequence of Drosophila melanogaster.</title>
        <authorList>
            <person name="Adams M.D."/>
            <person name="Celniker S.E."/>
            <person name="Holt R.A."/>
            <person name="Evans C.A."/>
            <person name="Gocayne J.D."/>
            <person name="Amanatides P.G."/>
            <person name="Scherer S.E."/>
            <person name="Li P.W."/>
            <person name="Hoskins R.A."/>
            <person name="Galle R.F."/>
            <person name="George R.A."/>
            <person name="Lewis S.E."/>
            <person name="Richards S."/>
            <person name="Ashburner M."/>
            <person name="Henderson S.N."/>
            <person name="Sutton G.G."/>
            <person name="Wortman J.R."/>
            <person name="Yandell M.D."/>
            <person name="Zhang Q."/>
            <person name="Chen L.X."/>
            <person name="Brandon R.C."/>
            <person name="Rogers Y.-H.C."/>
            <person name="Blazej R.G."/>
            <person name="Champe M."/>
            <person name="Pfeiffer B.D."/>
            <person name="Wan K.H."/>
            <person name="Doyle C."/>
            <person name="Baxter E.G."/>
            <person name="Helt G."/>
            <person name="Nelson C.R."/>
            <person name="Miklos G.L.G."/>
            <person name="Abril J.F."/>
            <person name="Agbayani A."/>
            <person name="An H.-J."/>
            <person name="Andrews-Pfannkoch C."/>
            <person name="Baldwin D."/>
            <person name="Ballew R.M."/>
            <person name="Basu A."/>
            <person name="Baxendale J."/>
            <person name="Bayraktaroglu L."/>
            <person name="Beasley E.M."/>
            <person name="Beeson K.Y."/>
            <person name="Benos P.V."/>
            <person name="Berman B.P."/>
            <person name="Bhandari D."/>
            <person name="Bolshakov S."/>
            <person name="Borkova D."/>
            <person name="Botchan M.R."/>
            <person name="Bouck J."/>
            <person name="Brokstein P."/>
            <person name="Brottier P."/>
            <person name="Burtis K.C."/>
            <person name="Busam D.A."/>
            <person name="Butler H."/>
            <person name="Cadieu E."/>
            <person name="Center A."/>
            <person name="Chandra I."/>
            <person name="Cherry J.M."/>
            <person name="Cawley S."/>
            <person name="Dahlke C."/>
            <person name="Davenport L.B."/>
            <person name="Davies P."/>
            <person name="de Pablos B."/>
            <person name="Delcher A."/>
            <person name="Deng Z."/>
            <person name="Mays A.D."/>
            <person name="Dew I."/>
            <person name="Dietz S.M."/>
            <person name="Dodson K."/>
            <person name="Doup L.E."/>
            <person name="Downes M."/>
            <person name="Dugan-Rocha S."/>
            <person name="Dunkov B.C."/>
            <person name="Dunn P."/>
            <person name="Durbin K.J."/>
            <person name="Evangelista C.C."/>
            <person name="Ferraz C."/>
            <person name="Ferriera S."/>
            <person name="Fleischmann W."/>
            <person name="Fosler C."/>
            <person name="Gabrielian A.E."/>
            <person name="Garg N.S."/>
            <person name="Gelbart W.M."/>
            <person name="Glasser K."/>
            <person name="Glodek A."/>
            <person name="Gong F."/>
            <person name="Gorrell J.H."/>
            <person name="Gu Z."/>
            <person name="Guan P."/>
            <person name="Harris M."/>
            <person name="Harris N.L."/>
            <person name="Harvey D.A."/>
            <person name="Heiman T.J."/>
            <person name="Hernandez J.R."/>
            <person name="Houck J."/>
            <person name="Hostin D."/>
            <person name="Houston K.A."/>
            <person name="Howland T.J."/>
            <person name="Wei M.-H."/>
            <person name="Ibegwam C."/>
            <person name="Jalali M."/>
            <person name="Kalush F."/>
            <person name="Karpen G.H."/>
            <person name="Ke Z."/>
            <person name="Kennison J.A."/>
            <person name="Ketchum K.A."/>
            <person name="Kimmel B.E."/>
            <person name="Kodira C.D."/>
            <person name="Kraft C.L."/>
            <person name="Kravitz S."/>
            <person name="Kulp D."/>
            <person name="Lai Z."/>
            <person name="Lasko P."/>
            <person name="Lei Y."/>
            <person name="Levitsky A.A."/>
            <person name="Li J.H."/>
            <person name="Li Z."/>
            <person name="Liang Y."/>
            <person name="Lin X."/>
            <person name="Liu X."/>
            <person name="Mattei B."/>
            <person name="McIntosh T.C."/>
            <person name="McLeod M.P."/>
            <person name="McPherson D."/>
            <person name="Merkulov G."/>
            <person name="Milshina N.V."/>
            <person name="Mobarry C."/>
            <person name="Morris J."/>
            <person name="Moshrefi A."/>
            <person name="Mount S.M."/>
            <person name="Moy M."/>
            <person name="Murphy B."/>
            <person name="Murphy L."/>
            <person name="Muzny D.M."/>
            <person name="Nelson D.L."/>
            <person name="Nelson D.R."/>
            <person name="Nelson K.A."/>
            <person name="Nixon K."/>
            <person name="Nusskern D.R."/>
            <person name="Pacleb J.M."/>
            <person name="Palazzolo M."/>
            <person name="Pittman G.S."/>
            <person name="Pan S."/>
            <person name="Pollard J."/>
            <person name="Puri V."/>
            <person name="Reese M.G."/>
            <person name="Reinert K."/>
            <person name="Remington K."/>
            <person name="Saunders R.D.C."/>
            <person name="Scheeler F."/>
            <person name="Shen H."/>
            <person name="Shue B.C."/>
            <person name="Siden-Kiamos I."/>
            <person name="Simpson M."/>
            <person name="Skupski M.P."/>
            <person name="Smith T.J."/>
            <person name="Spier E."/>
            <person name="Spradling A.C."/>
            <person name="Stapleton M."/>
            <person name="Strong R."/>
            <person name="Sun E."/>
            <person name="Svirskas R."/>
            <person name="Tector C."/>
            <person name="Turner R."/>
            <person name="Venter E."/>
            <person name="Wang A.H."/>
            <person name="Wang X."/>
            <person name="Wang Z.-Y."/>
            <person name="Wassarman D.A."/>
            <person name="Weinstock G.M."/>
            <person name="Weissenbach J."/>
            <person name="Williams S.M."/>
            <person name="Woodage T."/>
            <person name="Worley K.C."/>
            <person name="Wu D."/>
            <person name="Yang S."/>
            <person name="Yao Q.A."/>
            <person name="Ye J."/>
            <person name="Yeh R.-F."/>
            <person name="Zaveri J.S."/>
            <person name="Zhan M."/>
            <person name="Zhang G."/>
            <person name="Zhao Q."/>
            <person name="Zheng L."/>
            <person name="Zheng X.H."/>
            <person name="Zhong F.N."/>
            <person name="Zhong W."/>
            <person name="Zhou X."/>
            <person name="Zhu S.C."/>
            <person name="Zhu X."/>
            <person name="Smith H.O."/>
            <person name="Gibbs R.A."/>
            <person name="Myers E.W."/>
            <person name="Rubin G.M."/>
            <person name="Venter J.C."/>
        </authorList>
    </citation>
    <scope>NUCLEOTIDE SEQUENCE [LARGE SCALE GENOMIC DNA]</scope>
    <source>
        <strain evidence="10">Berkeley</strain>
    </source>
</reference>
<reference evidence="10" key="3">
    <citation type="journal article" date="2002" name="Genome Biol.">
        <title>Annotation of the Drosophila melanogaster euchromatic genome: a systematic review.</title>
        <authorList>
            <person name="Misra S."/>
            <person name="Crosby M.A."/>
            <person name="Mungall C.J."/>
            <person name="Matthews B.B."/>
            <person name="Campbell K.S."/>
            <person name="Hradecky P."/>
            <person name="Huang Y."/>
            <person name="Kaminker J.S."/>
            <person name="Millburn G.H."/>
            <person name="Prochnik S.E."/>
            <person name="Smith C.D."/>
            <person name="Tupy J.L."/>
            <person name="Whitfield E.J."/>
            <person name="Bayraktaroglu L."/>
            <person name="Berman B.P."/>
            <person name="Bettencourt B.R."/>
            <person name="Celniker S.E."/>
            <person name="de Grey A.D.N.J."/>
            <person name="Drysdale R.A."/>
            <person name="Harris N.L."/>
            <person name="Richter J."/>
            <person name="Russo S."/>
            <person name="Schroeder A.J."/>
            <person name="Shu S.Q."/>
            <person name="Stapleton M."/>
            <person name="Yamada C."/>
            <person name="Ashburner M."/>
            <person name="Gelbart W.M."/>
            <person name="Rubin G.M."/>
            <person name="Lewis S.E."/>
        </authorList>
    </citation>
    <scope>GENOME REANNOTATION</scope>
    <source>
        <strain>Berkeley</strain>
    </source>
</reference>
<reference evidence="7" key="4">
    <citation type="journal article" date="2002" name="Genome Biol.">
        <title>A Drosophila full-length cDNA resource.</title>
        <authorList>
            <person name="Stapleton M."/>
            <person name="Carlson J.W."/>
            <person name="Brokstein P."/>
            <person name="Yu C."/>
            <person name="Champe M."/>
            <person name="George R.A."/>
            <person name="Guarin H."/>
            <person name="Kronmiller B."/>
            <person name="Pacleb J.M."/>
            <person name="Park S."/>
            <person name="Wan K.H."/>
            <person name="Rubin G.M."/>
            <person name="Celniker S.E."/>
        </authorList>
    </citation>
    <scope>NUCLEOTIDE SEQUENCE [LARGE SCALE MRNA]</scope>
    <source>
        <strain evidence="7">Berkeley</strain>
        <tissue evidence="7">Embryo</tissue>
    </source>
</reference>
<proteinExistence type="evidence at protein level"/>
<keyword id="KW-0031">Aminopeptidase</keyword>
<keyword id="KW-0963">Cytoplasm</keyword>
<keyword id="KW-0378">Hydrolase</keyword>
<keyword id="KW-0464">Manganese</keyword>
<keyword id="KW-0479">Metal-binding</keyword>
<keyword id="KW-0645">Protease</keyword>
<keyword id="KW-1185">Reference proteome</keyword>
<gene>
    <name evidence="9" type="primary">ApepP</name>
    <name evidence="9" type="ORF">CG6291</name>
</gene>
<comment type="function">
    <text evidence="3">Catalyzes the removal of a penultimate prolyl residue from the N-termini of peptides, such as Arg-Pro-Pro.</text>
</comment>
<comment type="catalytic activity">
    <reaction evidence="3">
        <text>Release of any N-terminal amino acid, including proline, that is linked to proline, even from a dipeptide or tripeptide.</text>
        <dbReference type="EC" id="3.4.11.9"/>
    </reaction>
</comment>
<comment type="cofactor">
    <cofactor evidence="6">
        <name>Mn(2+)</name>
        <dbReference type="ChEBI" id="CHEBI:29035"/>
    </cofactor>
</comment>
<comment type="activity regulation">
    <text evidence="3">Inhibited by the chelating agent EDTA. Divalent metal ions have substrate- and concentration-dependent effects on activity. Activity towards bradykinin is inhibited with increasing Mn(2+) concentration. Activity towards substance P is stimulated by low Mn(2+) concentrations (in the range 10 uM-1 mM) but inhibited by Mn(2+) concentrations in excess of 1 mM. Ca(2+), Mg(2+) and Co(2+) stimulate activity towards substance P at concentrations of 10-100 uM but are inhibitory at concentrations of 1 mM. Zn(2+), Ni(2+) and Cu(2+) strongly inhibit activity towards substance P at concentrations of 1 mM.</text>
</comment>
<comment type="biophysicochemical properties">
    <phDependence>
        <text evidence="3">Optimum pH is 7.6.</text>
    </phDependence>
</comment>
<comment type="subcellular location">
    <subcellularLocation>
        <location evidence="3">Cytoplasm</location>
    </subcellularLocation>
</comment>
<comment type="tissue specificity">
    <text evidence="3">Detected in gut, brain, testes and ovary.</text>
</comment>
<comment type="developmental stage">
    <text evidence="3">Expressed in embryos from 9-22 hours, but not detected in first and second instar larvae. Expressed in 3rd instar larvae and at high levels in pupae.</text>
</comment>
<comment type="similarity">
    <text evidence="5">Belongs to the peptidase M24B family.</text>
</comment>
<organism evidence="10">
    <name type="scientific">Drosophila melanogaster</name>
    <name type="common">Fruit fly</name>
    <dbReference type="NCBI Taxonomy" id="7227"/>
    <lineage>
        <taxon>Eukaryota</taxon>
        <taxon>Metazoa</taxon>
        <taxon>Ecdysozoa</taxon>
        <taxon>Arthropoda</taxon>
        <taxon>Hexapoda</taxon>
        <taxon>Insecta</taxon>
        <taxon>Pterygota</taxon>
        <taxon>Neoptera</taxon>
        <taxon>Endopterygota</taxon>
        <taxon>Diptera</taxon>
        <taxon>Brachycera</taxon>
        <taxon>Muscomorpha</taxon>
        <taxon>Ephydroidea</taxon>
        <taxon>Drosophilidae</taxon>
        <taxon>Drosophila</taxon>
        <taxon>Sophophora</taxon>
    </lineage>
</organism>
<dbReference type="EC" id="3.4.11.9" evidence="3"/>
<dbReference type="EMBL" id="AY082012">
    <property type="protein sequence ID" value="AAL99293.1"/>
    <property type="molecule type" value="Genomic_DNA"/>
</dbReference>
<dbReference type="EMBL" id="AE014134">
    <property type="protein sequence ID" value="AAF53589.1"/>
    <property type="molecule type" value="Genomic_DNA"/>
</dbReference>
<dbReference type="EMBL" id="AE014134">
    <property type="protein sequence ID" value="AFH03727.1"/>
    <property type="molecule type" value="Genomic_DNA"/>
</dbReference>
<dbReference type="EMBL" id="AY061297">
    <property type="protein sequence ID" value="AAL28845.1"/>
    <property type="molecule type" value="mRNA"/>
</dbReference>
<dbReference type="PIR" id="JC7827">
    <property type="entry name" value="JC7827"/>
</dbReference>
<dbReference type="RefSeq" id="NP_001246053.1">
    <property type="nucleotide sequence ID" value="NM_001259124.2"/>
</dbReference>
<dbReference type="RefSeq" id="NP_477409.1">
    <property type="nucleotide sequence ID" value="NM_058061.5"/>
</dbReference>
<dbReference type="SMR" id="Q9VJG0"/>
<dbReference type="DIP" id="DIP-21902N"/>
<dbReference type="FunCoup" id="Q9VJG0">
    <property type="interactions" value="1592"/>
</dbReference>
<dbReference type="IntAct" id="Q9VJG0">
    <property type="interactions" value="1"/>
</dbReference>
<dbReference type="STRING" id="7227.FBpp0293470"/>
<dbReference type="MEROPS" id="M24.009"/>
<dbReference type="GlyGen" id="Q9VJG0">
    <property type="glycosylation" value="2 sites"/>
</dbReference>
<dbReference type="PaxDb" id="7227-FBpp0080509"/>
<dbReference type="DNASU" id="35029"/>
<dbReference type="EnsemblMetazoa" id="FBtr0080956">
    <property type="protein sequence ID" value="FBpp0080509"/>
    <property type="gene ID" value="FBgn0026150"/>
</dbReference>
<dbReference type="EnsemblMetazoa" id="FBtr0304931">
    <property type="protein sequence ID" value="FBpp0293470"/>
    <property type="gene ID" value="FBgn0026150"/>
</dbReference>
<dbReference type="GeneID" id="35029"/>
<dbReference type="KEGG" id="dme:Dmel_CG6291"/>
<dbReference type="UCSC" id="CG6291-RA">
    <property type="organism name" value="d. melanogaster"/>
</dbReference>
<dbReference type="AGR" id="FB:FBgn0026150"/>
<dbReference type="CTD" id="35029"/>
<dbReference type="FlyBase" id="FBgn0026150">
    <property type="gene designation" value="ApepP"/>
</dbReference>
<dbReference type="VEuPathDB" id="VectorBase:FBgn0026150"/>
<dbReference type="eggNOG" id="KOG2413">
    <property type="taxonomic scope" value="Eukaryota"/>
</dbReference>
<dbReference type="GeneTree" id="ENSGT00940000157716"/>
<dbReference type="HOGENOM" id="CLU_011781_2_2_1"/>
<dbReference type="InParanoid" id="Q9VJG0"/>
<dbReference type="OMA" id="EPGMILS"/>
<dbReference type="OrthoDB" id="9995434at2759"/>
<dbReference type="PhylomeDB" id="Q9VJG0"/>
<dbReference type="BioGRID-ORCS" id="35029">
    <property type="hits" value="0 hits in 3 CRISPR screens"/>
</dbReference>
<dbReference type="GenomeRNAi" id="35029"/>
<dbReference type="PRO" id="PR:Q9VJG0"/>
<dbReference type="Proteomes" id="UP000000803">
    <property type="component" value="Chromosome 2L"/>
</dbReference>
<dbReference type="Bgee" id="FBgn0026150">
    <property type="expression patterns" value="Expressed in embryonic/larval hemocyte (Drosophila) and 105 other cell types or tissues"/>
</dbReference>
<dbReference type="ExpressionAtlas" id="Q9VJG0">
    <property type="expression patterns" value="baseline and differential"/>
</dbReference>
<dbReference type="GO" id="GO:0005829">
    <property type="term" value="C:cytosol"/>
    <property type="evidence" value="ECO:0000314"/>
    <property type="project" value="FlyBase"/>
</dbReference>
<dbReference type="GO" id="GO:0046872">
    <property type="term" value="F:metal ion binding"/>
    <property type="evidence" value="ECO:0007669"/>
    <property type="project" value="UniProtKB-KW"/>
</dbReference>
<dbReference type="GO" id="GO:0070006">
    <property type="term" value="F:metalloaminopeptidase activity"/>
    <property type="evidence" value="ECO:0000314"/>
    <property type="project" value="FlyBase"/>
</dbReference>
<dbReference type="GO" id="GO:0006508">
    <property type="term" value="P:proteolysis"/>
    <property type="evidence" value="ECO:0000314"/>
    <property type="project" value="FlyBase"/>
</dbReference>
<dbReference type="CDD" id="cd01085">
    <property type="entry name" value="APP"/>
    <property type="match status" value="1"/>
</dbReference>
<dbReference type="FunFam" id="3.40.350.10:FF:000038">
    <property type="entry name" value="Aminopeptidase P"/>
    <property type="match status" value="1"/>
</dbReference>
<dbReference type="FunFam" id="3.90.230.10:FF:000007">
    <property type="entry name" value="Xaa-Pro aminopeptidase P"/>
    <property type="match status" value="1"/>
</dbReference>
<dbReference type="FunFam" id="3.40.350.10:FF:000003">
    <property type="entry name" value="Xaa-pro aminopeptidase P"/>
    <property type="match status" value="1"/>
</dbReference>
<dbReference type="Gene3D" id="3.90.230.10">
    <property type="entry name" value="Creatinase/methionine aminopeptidase superfamily"/>
    <property type="match status" value="1"/>
</dbReference>
<dbReference type="Gene3D" id="3.40.350.10">
    <property type="entry name" value="Creatinase/prolidase N-terminal domain"/>
    <property type="match status" value="2"/>
</dbReference>
<dbReference type="InterPro" id="IPR029149">
    <property type="entry name" value="Creatin/AminoP/Spt16_N"/>
</dbReference>
<dbReference type="InterPro" id="IPR036005">
    <property type="entry name" value="Creatinase/aminopeptidase-like"/>
</dbReference>
<dbReference type="InterPro" id="IPR000587">
    <property type="entry name" value="Creatinase_N"/>
</dbReference>
<dbReference type="InterPro" id="IPR000994">
    <property type="entry name" value="Pept_M24"/>
</dbReference>
<dbReference type="InterPro" id="IPR033740">
    <property type="entry name" value="Pept_M24B"/>
</dbReference>
<dbReference type="InterPro" id="IPR032416">
    <property type="entry name" value="Peptidase_M24_C"/>
</dbReference>
<dbReference type="InterPro" id="IPR050422">
    <property type="entry name" value="X-Pro_aminopeptidase_P"/>
</dbReference>
<dbReference type="PANTHER" id="PTHR43763">
    <property type="entry name" value="XAA-PRO AMINOPEPTIDASE 1"/>
    <property type="match status" value="1"/>
</dbReference>
<dbReference type="PANTHER" id="PTHR43763:SF20">
    <property type="entry name" value="XAA-PRO AMINOPEPTIDASE APEPP"/>
    <property type="match status" value="1"/>
</dbReference>
<dbReference type="Pfam" id="PF01321">
    <property type="entry name" value="Creatinase_N"/>
    <property type="match status" value="1"/>
</dbReference>
<dbReference type="Pfam" id="PF16189">
    <property type="entry name" value="Creatinase_N_2"/>
    <property type="match status" value="1"/>
</dbReference>
<dbReference type="Pfam" id="PF00557">
    <property type="entry name" value="Peptidase_M24"/>
    <property type="match status" value="1"/>
</dbReference>
<dbReference type="Pfam" id="PF16188">
    <property type="entry name" value="Peptidase_M24_C"/>
    <property type="match status" value="1"/>
</dbReference>
<dbReference type="SUPFAM" id="SSF55920">
    <property type="entry name" value="Creatinase/aminopeptidase"/>
    <property type="match status" value="1"/>
</dbReference>
<dbReference type="SUPFAM" id="SSF53092">
    <property type="entry name" value="Creatinase/prolidase N-terminal domain"/>
    <property type="match status" value="1"/>
</dbReference>
<protein>
    <recommendedName>
        <fullName evidence="5">Xaa-Pro aminopeptidase ApepP</fullName>
        <ecNumber evidence="3">3.4.11.9</ecNumber>
    </recommendedName>
    <alternativeName>
        <fullName evidence="4">Aminopeptidase P</fullName>
        <shortName evidence="4">AP-P</shortName>
    </alternativeName>
</protein>
<evidence type="ECO:0000250" key="1">
    <source>
        <dbReference type="UniProtKB" id="O44750"/>
    </source>
</evidence>
<evidence type="ECO:0000250" key="2">
    <source>
        <dbReference type="UniProtKB" id="Q9NQW7"/>
    </source>
</evidence>
<evidence type="ECO:0000269" key="3">
    <source>
    </source>
</evidence>
<evidence type="ECO:0000303" key="4">
    <source>
    </source>
</evidence>
<evidence type="ECO:0000305" key="5"/>
<evidence type="ECO:0000305" key="6">
    <source>
    </source>
</evidence>
<evidence type="ECO:0000312" key="7">
    <source>
        <dbReference type="EMBL" id="AAL28845.1"/>
    </source>
</evidence>
<evidence type="ECO:0000312" key="8">
    <source>
        <dbReference type="EMBL" id="AAL99293.1"/>
    </source>
</evidence>
<evidence type="ECO:0000312" key="9">
    <source>
        <dbReference type="FlyBase" id="FBgn0026150"/>
    </source>
</evidence>
<evidence type="ECO:0000312" key="10">
    <source>
        <dbReference type="Proteomes" id="UP000000803"/>
    </source>
</evidence>
<sequence>MKRSTTQILTRLRELMLRAQVGDSCGISAYIVPSDDAHQSEYQCQHDERRSFVSGFDGSAGTAVITTETALLWTDGRYYQQAEKQLDSNWVLMRDGLSATPSIGAWLAKNLPKGSFVGVDPRLLSFRVWKPIETELSSAECQLVPIEGNLIDEVWGEDQPPQTSNKIITLKLEHSGVTIAKKWDVVRQQLKEKNADALVVSALDEIAWFLNLRGSDIDFNPVFFSYLIVTNDELLLFVDSGKLPTDFVQHQKENNVQISVLPYASIGIEISKIVSTRESKIWIAPTSSYYLTALIPKSRRIQEVTPICVLKAIKNDVEIAGFINSHIRDGVALCQYFAWLEDQVNKGAEVDEMSGADKLESFRSTKDKYMGLSFTTISASGPNGSVIHYHPKKETNRKINDKEIYLCDSGAQYLDGTTDVTRTLHFGEPTEFQKEAYTRVLKGQLSFGSTVFPAKVKGQVLDTLARKALWDVGLDYGHGTGHGVGHFLNVHEGPMGVGIRLMPDDPGLQANMFISNEPGFYQDGEFGIRVEDIVQIVPGQVAHNFSNRGALTFKTITMCPKQTKMIKKELLSDAEVKLLNSYHQQVWDTLSPILSREGDEFTLSWLKKEVQPI</sequence>
<name>XPP_DROME</name>
<feature type="chain" id="PRO_0000438801" description="Xaa-Pro aminopeptidase ApepP">
    <location>
        <begin position="1"/>
        <end position="613"/>
    </location>
</feature>
<feature type="binding site" evidence="1">
    <location>
        <position position="77"/>
    </location>
    <ligand>
        <name>substrate</name>
    </ligand>
</feature>
<feature type="binding site" evidence="1">
    <location>
        <position position="388"/>
    </location>
    <ligand>
        <name>substrate</name>
    </ligand>
</feature>
<feature type="binding site" evidence="2">
    <location>
        <position position="408"/>
    </location>
    <ligand>
        <name>Mn(2+)</name>
        <dbReference type="ChEBI" id="CHEBI:29035"/>
        <label>1</label>
    </ligand>
</feature>
<feature type="binding site" evidence="2">
    <location>
        <position position="419"/>
    </location>
    <ligand>
        <name>Mn(2+)</name>
        <dbReference type="ChEBI" id="CHEBI:29035"/>
        <label>1</label>
    </ligand>
</feature>
<feature type="binding site" evidence="2">
    <location>
        <position position="419"/>
    </location>
    <ligand>
        <name>Mn(2+)</name>
        <dbReference type="ChEBI" id="CHEBI:29035"/>
        <label>2</label>
    </ligand>
</feature>
<feature type="binding site" evidence="2">
    <location>
        <position position="482"/>
    </location>
    <ligand>
        <name>Mn(2+)</name>
        <dbReference type="ChEBI" id="CHEBI:29035"/>
        <label>2</label>
    </ligand>
</feature>
<feature type="binding site" evidence="1">
    <location>
        <position position="482"/>
    </location>
    <ligand>
        <name>substrate</name>
    </ligand>
</feature>
<feature type="binding site" evidence="1">
    <location>
        <position position="491"/>
    </location>
    <ligand>
        <name>substrate</name>
    </ligand>
</feature>
<feature type="binding site" evidence="2">
    <location>
        <position position="517"/>
    </location>
    <ligand>
        <name>Mn(2+)</name>
        <dbReference type="ChEBI" id="CHEBI:29035"/>
        <label>2</label>
    </ligand>
</feature>
<feature type="binding site" evidence="1">
    <location>
        <position position="517"/>
    </location>
    <ligand>
        <name>substrate</name>
    </ligand>
</feature>
<feature type="binding site" evidence="2">
    <location>
        <position position="531"/>
    </location>
    <ligand>
        <name>Mn(2+)</name>
        <dbReference type="ChEBI" id="CHEBI:29035"/>
        <label>1</label>
    </ligand>
</feature>
<feature type="binding site" evidence="2">
    <location>
        <position position="531"/>
    </location>
    <ligand>
        <name>Mn(2+)</name>
        <dbReference type="ChEBI" id="CHEBI:29035"/>
        <label>2</label>
    </ligand>
</feature>